<reference key="1">
    <citation type="journal article" date="2007" name="J. Bacteriol.">
        <title>The genome sequence of avian pathogenic Escherichia coli strain O1:K1:H7 shares strong similarities with human extraintestinal pathogenic E. coli genomes.</title>
        <authorList>
            <person name="Johnson T.J."/>
            <person name="Kariyawasam S."/>
            <person name="Wannemuehler Y."/>
            <person name="Mangiamele P."/>
            <person name="Johnson S.J."/>
            <person name="Doetkott C."/>
            <person name="Skyberg J.A."/>
            <person name="Lynne A.M."/>
            <person name="Johnson J.R."/>
            <person name="Nolan L.K."/>
        </authorList>
    </citation>
    <scope>NUCLEOTIDE SEQUENCE [LARGE SCALE GENOMIC DNA]</scope>
</reference>
<accession>A1AB32</accession>
<protein>
    <recommendedName>
        <fullName evidence="1">Glucans biosynthesis protein D</fullName>
    </recommendedName>
</protein>
<name>OPGD_ECOK1</name>
<dbReference type="EMBL" id="CP000468">
    <property type="protein sequence ID" value="ABJ00872.1"/>
    <property type="molecule type" value="Genomic_DNA"/>
</dbReference>
<dbReference type="RefSeq" id="WP_000375944.1">
    <property type="nucleotide sequence ID" value="NZ_CADILS010000032.1"/>
</dbReference>
<dbReference type="SMR" id="A1AB32"/>
<dbReference type="KEGG" id="ecv:APECO1_572"/>
<dbReference type="HOGENOM" id="CLU_023403_2_0_6"/>
<dbReference type="UniPathway" id="UPA00637"/>
<dbReference type="Proteomes" id="UP000008216">
    <property type="component" value="Chromosome"/>
</dbReference>
<dbReference type="GO" id="GO:0030288">
    <property type="term" value="C:outer membrane-bounded periplasmic space"/>
    <property type="evidence" value="ECO:0007669"/>
    <property type="project" value="TreeGrafter"/>
</dbReference>
<dbReference type="GO" id="GO:0030246">
    <property type="term" value="F:carbohydrate binding"/>
    <property type="evidence" value="ECO:0007669"/>
    <property type="project" value="InterPro"/>
</dbReference>
<dbReference type="GO" id="GO:0003824">
    <property type="term" value="F:catalytic activity"/>
    <property type="evidence" value="ECO:0007669"/>
    <property type="project" value="InterPro"/>
</dbReference>
<dbReference type="GO" id="GO:0051274">
    <property type="term" value="P:beta-glucan biosynthetic process"/>
    <property type="evidence" value="ECO:0007669"/>
    <property type="project" value="TreeGrafter"/>
</dbReference>
<dbReference type="FunFam" id="2.60.40.10:FF:000379">
    <property type="entry name" value="Glucans biosynthesis protein D"/>
    <property type="match status" value="1"/>
</dbReference>
<dbReference type="FunFam" id="2.70.98.10:FF:000004">
    <property type="entry name" value="Glucans biosynthesis protein D"/>
    <property type="match status" value="1"/>
</dbReference>
<dbReference type="Gene3D" id="2.70.98.10">
    <property type="match status" value="1"/>
</dbReference>
<dbReference type="Gene3D" id="2.60.40.10">
    <property type="entry name" value="Immunoglobulins"/>
    <property type="match status" value="1"/>
</dbReference>
<dbReference type="HAMAP" id="MF_01068">
    <property type="entry name" value="MdoD_OpgD"/>
    <property type="match status" value="1"/>
</dbReference>
<dbReference type="InterPro" id="IPR011013">
    <property type="entry name" value="Gal_mutarotase_sf_dom"/>
</dbReference>
<dbReference type="InterPro" id="IPR014718">
    <property type="entry name" value="GH-type_carb-bd"/>
</dbReference>
<dbReference type="InterPro" id="IPR023724">
    <property type="entry name" value="Glucan_biosyn_MdoD"/>
</dbReference>
<dbReference type="InterPro" id="IPR014438">
    <property type="entry name" value="Glucan_biosyn_MdoG/MdoD"/>
</dbReference>
<dbReference type="InterPro" id="IPR007444">
    <property type="entry name" value="Glucan_biosyn_MdoG_C"/>
</dbReference>
<dbReference type="InterPro" id="IPR013783">
    <property type="entry name" value="Ig-like_fold"/>
</dbReference>
<dbReference type="InterPro" id="IPR014756">
    <property type="entry name" value="Ig_E-set"/>
</dbReference>
<dbReference type="InterPro" id="IPR006311">
    <property type="entry name" value="TAT_signal"/>
</dbReference>
<dbReference type="InterPro" id="IPR019546">
    <property type="entry name" value="TAT_signal_bac_arc"/>
</dbReference>
<dbReference type="NCBIfam" id="TIGR01409">
    <property type="entry name" value="TAT_signal_seq"/>
    <property type="match status" value="1"/>
</dbReference>
<dbReference type="PANTHER" id="PTHR30504">
    <property type="entry name" value="GLUCANS BIOSYNTHESIS PROTEIN"/>
    <property type="match status" value="1"/>
</dbReference>
<dbReference type="PANTHER" id="PTHR30504:SF3">
    <property type="entry name" value="GLUCANS BIOSYNTHESIS PROTEIN D"/>
    <property type="match status" value="1"/>
</dbReference>
<dbReference type="Pfam" id="PF04349">
    <property type="entry name" value="MdoG"/>
    <property type="match status" value="1"/>
</dbReference>
<dbReference type="PIRSF" id="PIRSF006281">
    <property type="entry name" value="MdoG"/>
    <property type="match status" value="1"/>
</dbReference>
<dbReference type="SUPFAM" id="SSF81296">
    <property type="entry name" value="E set domains"/>
    <property type="match status" value="1"/>
</dbReference>
<dbReference type="SUPFAM" id="SSF74650">
    <property type="entry name" value="Galactose mutarotase-like"/>
    <property type="match status" value="1"/>
</dbReference>
<dbReference type="PROSITE" id="PS51318">
    <property type="entry name" value="TAT"/>
    <property type="match status" value="1"/>
</dbReference>
<feature type="signal peptide" description="Tat-type signal" evidence="1">
    <location>
        <begin position="1"/>
        <end position="32"/>
    </location>
</feature>
<feature type="chain" id="PRO_1000064545" description="Glucans biosynthesis protein D">
    <location>
        <begin position="33"/>
        <end position="551"/>
    </location>
</feature>
<proteinExistence type="inferred from homology"/>
<organism>
    <name type="scientific">Escherichia coli O1:K1 / APEC</name>
    <dbReference type="NCBI Taxonomy" id="405955"/>
    <lineage>
        <taxon>Bacteria</taxon>
        <taxon>Pseudomonadati</taxon>
        <taxon>Pseudomonadota</taxon>
        <taxon>Gammaproteobacteria</taxon>
        <taxon>Enterobacterales</taxon>
        <taxon>Enterobacteriaceae</taxon>
        <taxon>Escherichia</taxon>
    </lineage>
</organism>
<gene>
    <name evidence="1" type="primary">mdoD</name>
    <name evidence="1" type="synonym">opgD</name>
    <name type="ordered locus">Ecok1_13780</name>
    <name type="ORF">APECO1_572</name>
</gene>
<sequence length="551" mass="62795">MDRRRFIKGSMAMAAVCGTSGIASLFSQAAFAADSDIADGQTQRFDFSILQSMAHDLAQTAWRGAPRPLPDTLATMTPQAYNSIQYDAEKSLWHNVENRQLDAQFFHMGMGFRRRVRMFSVDPATHLAREIHFRPELFKYNDAGVDTKQLEGQSDLGFAGFRVFKAPELARRDVVSFLGASYFRAVDDTYQYGLSARGLAIDTYTDSKEEFPDFTAFWFDTVKPGATTFTVYALLDSASITGAYKFTIHCEKNQVIMDVENHLYARKDIKQLGIAPMTSMFSCGTNERRMCDTIHPQIHDSDRLSMWRGNGEWICRPLNNPQKLQFNAYTDNNPKGFGLLQLDRDFSHYQDIMGWYNKRPSLWVEPRNKWGKGTIGLMEIPTTGETLDNIVCFWQPEKAVKAGDEFAFQYRLYWSAQPPVHCPLARVMATRTGMGGFPEGWAPGEHYPEKWARRFAVDFVGGDLKAAAPKGIEPVITLSSGEAKQIEILYIEPIDGYRIQFDWYPTSDSTDPVDMRMYLRCQGDAISETWLYQYFPPAPDKRQYVDDRVMS</sequence>
<evidence type="ECO:0000255" key="1">
    <source>
        <dbReference type="HAMAP-Rule" id="MF_01068"/>
    </source>
</evidence>
<comment type="function">
    <text evidence="1">Probably involved in the control of the structural glucose backbone of osmoregulated periplasmic glucans (OPGs).</text>
</comment>
<comment type="pathway">
    <text evidence="1">Glycan metabolism; osmoregulated periplasmic glucan (OPG) biosynthesis.</text>
</comment>
<comment type="subcellular location">
    <subcellularLocation>
        <location evidence="1">Periplasm</location>
    </subcellularLocation>
</comment>
<comment type="PTM">
    <text>Predicted to be exported by the Tat system. The position of the signal peptide cleavage has not been experimentally proven.</text>
</comment>
<comment type="similarity">
    <text evidence="1">Belongs to the OpgD/OpgG family.</text>
</comment>
<keyword id="KW-0574">Periplasm</keyword>
<keyword id="KW-1185">Reference proteome</keyword>
<keyword id="KW-0732">Signal</keyword>